<dbReference type="EC" id="3.4.24.-"/>
<dbReference type="EMBL" id="HM627203">
    <property type="protein sequence ID" value="AEH95530.1"/>
    <property type="molecule type" value="mRNA"/>
</dbReference>
<dbReference type="SMR" id="F8RKW0"/>
<dbReference type="MEROPS" id="M12.159"/>
<dbReference type="GO" id="GO:0005576">
    <property type="term" value="C:extracellular region"/>
    <property type="evidence" value="ECO:0007669"/>
    <property type="project" value="UniProtKB-SubCell"/>
</dbReference>
<dbReference type="GO" id="GO:0005886">
    <property type="term" value="C:plasma membrane"/>
    <property type="evidence" value="ECO:0007669"/>
    <property type="project" value="TreeGrafter"/>
</dbReference>
<dbReference type="GO" id="GO:0046872">
    <property type="term" value="F:metal ion binding"/>
    <property type="evidence" value="ECO:0007669"/>
    <property type="project" value="UniProtKB-KW"/>
</dbReference>
<dbReference type="GO" id="GO:0004222">
    <property type="term" value="F:metalloendopeptidase activity"/>
    <property type="evidence" value="ECO:0007669"/>
    <property type="project" value="InterPro"/>
</dbReference>
<dbReference type="GO" id="GO:0090729">
    <property type="term" value="F:toxin activity"/>
    <property type="evidence" value="ECO:0007669"/>
    <property type="project" value="UniProtKB-KW"/>
</dbReference>
<dbReference type="GO" id="GO:0006508">
    <property type="term" value="P:proteolysis"/>
    <property type="evidence" value="ECO:0007669"/>
    <property type="project" value="UniProtKB-KW"/>
</dbReference>
<dbReference type="CDD" id="cd04269">
    <property type="entry name" value="ZnMc_adamalysin_II_like"/>
    <property type="match status" value="1"/>
</dbReference>
<dbReference type="FunFam" id="3.40.390.10:FF:000002">
    <property type="entry name" value="Disintegrin and metalloproteinase domain-containing protein 22"/>
    <property type="match status" value="1"/>
</dbReference>
<dbReference type="FunFam" id="4.10.70.10:FF:000001">
    <property type="entry name" value="Disintegrin and metalloproteinase domain-containing protein 22"/>
    <property type="match status" value="1"/>
</dbReference>
<dbReference type="Gene3D" id="3.40.390.10">
    <property type="entry name" value="Collagenase (Catalytic Domain)"/>
    <property type="match status" value="1"/>
</dbReference>
<dbReference type="Gene3D" id="4.10.70.10">
    <property type="entry name" value="Disintegrin domain"/>
    <property type="match status" value="1"/>
</dbReference>
<dbReference type="InterPro" id="IPR006586">
    <property type="entry name" value="ADAM_Cys-rich"/>
</dbReference>
<dbReference type="InterPro" id="IPR018358">
    <property type="entry name" value="Disintegrin_CS"/>
</dbReference>
<dbReference type="InterPro" id="IPR001762">
    <property type="entry name" value="Disintegrin_dom"/>
</dbReference>
<dbReference type="InterPro" id="IPR036436">
    <property type="entry name" value="Disintegrin_dom_sf"/>
</dbReference>
<dbReference type="InterPro" id="IPR024079">
    <property type="entry name" value="MetalloPept_cat_dom_sf"/>
</dbReference>
<dbReference type="InterPro" id="IPR001590">
    <property type="entry name" value="Peptidase_M12B"/>
</dbReference>
<dbReference type="InterPro" id="IPR002870">
    <property type="entry name" value="Peptidase_M12B_N"/>
</dbReference>
<dbReference type="InterPro" id="IPR034027">
    <property type="entry name" value="Reprolysin_adamalysin"/>
</dbReference>
<dbReference type="PANTHER" id="PTHR11905">
    <property type="entry name" value="ADAM A DISINTEGRIN AND METALLOPROTEASE DOMAIN"/>
    <property type="match status" value="1"/>
</dbReference>
<dbReference type="PANTHER" id="PTHR11905:SF32">
    <property type="entry name" value="DISINTEGRIN AND METALLOPROTEINASE DOMAIN-CONTAINING PROTEIN 28"/>
    <property type="match status" value="1"/>
</dbReference>
<dbReference type="Pfam" id="PF08516">
    <property type="entry name" value="ADAM_CR"/>
    <property type="match status" value="1"/>
</dbReference>
<dbReference type="Pfam" id="PF00200">
    <property type="entry name" value="Disintegrin"/>
    <property type="match status" value="1"/>
</dbReference>
<dbReference type="Pfam" id="PF01562">
    <property type="entry name" value="Pep_M12B_propep"/>
    <property type="match status" value="1"/>
</dbReference>
<dbReference type="Pfam" id="PF01421">
    <property type="entry name" value="Reprolysin"/>
    <property type="match status" value="1"/>
</dbReference>
<dbReference type="PRINTS" id="PR00289">
    <property type="entry name" value="DISINTEGRIN"/>
</dbReference>
<dbReference type="SMART" id="SM00608">
    <property type="entry name" value="ACR"/>
    <property type="match status" value="1"/>
</dbReference>
<dbReference type="SMART" id="SM00050">
    <property type="entry name" value="DISIN"/>
    <property type="match status" value="1"/>
</dbReference>
<dbReference type="SUPFAM" id="SSF57552">
    <property type="entry name" value="Blood coagulation inhibitor (disintegrin)"/>
    <property type="match status" value="1"/>
</dbReference>
<dbReference type="SUPFAM" id="SSF55486">
    <property type="entry name" value="Metalloproteases ('zincins'), catalytic domain"/>
    <property type="match status" value="1"/>
</dbReference>
<dbReference type="PROSITE" id="PS50215">
    <property type="entry name" value="ADAM_MEPRO"/>
    <property type="match status" value="1"/>
</dbReference>
<dbReference type="PROSITE" id="PS00427">
    <property type="entry name" value="DISINTEGRIN_1"/>
    <property type="match status" value="1"/>
</dbReference>
<dbReference type="PROSITE" id="PS50214">
    <property type="entry name" value="DISINTEGRIN_2"/>
    <property type="match status" value="1"/>
</dbReference>
<dbReference type="PROSITE" id="PS00142">
    <property type="entry name" value="ZINC_PROTEASE"/>
    <property type="match status" value="1"/>
</dbReference>
<keyword id="KW-0106">Calcium</keyword>
<keyword id="KW-1015">Disulfide bond</keyword>
<keyword id="KW-0325">Glycoprotein</keyword>
<keyword id="KW-1199">Hemostasis impairing toxin</keyword>
<keyword id="KW-0378">Hydrolase</keyword>
<keyword id="KW-0479">Metal-binding</keyword>
<keyword id="KW-0482">Metalloprotease</keyword>
<keyword id="KW-0645">Protease</keyword>
<keyword id="KW-0964">Secreted</keyword>
<keyword id="KW-0732">Signal</keyword>
<keyword id="KW-0800">Toxin</keyword>
<keyword id="KW-0862">Zinc</keyword>
<keyword id="KW-0865">Zymogen</keyword>
<accession>F8RKW0</accession>
<feature type="signal peptide" evidence="2">
    <location>
        <begin position="1"/>
        <end position="20"/>
    </location>
</feature>
<feature type="propeptide" id="PRO_0000425504" evidence="2">
    <location>
        <begin position="21"/>
        <end position="191"/>
    </location>
</feature>
<feature type="chain" id="PRO_0000425505" description="Zinc metalloproteinase-disintegrin-like MTP8">
    <location>
        <begin position="192"/>
        <end position="613"/>
    </location>
</feature>
<feature type="domain" description="Peptidase M12B" evidence="4">
    <location>
        <begin position="205"/>
        <end position="401"/>
    </location>
</feature>
<feature type="domain" description="Disintegrin" evidence="3">
    <location>
        <begin position="409"/>
        <end position="495"/>
    </location>
</feature>
<feature type="short sequence motif" description="D/ECD-tripeptide">
    <location>
        <begin position="473"/>
        <end position="475"/>
    </location>
</feature>
<feature type="binding site" evidence="1">
    <location>
        <position position="208"/>
    </location>
    <ligand>
        <name>Ca(2+)</name>
        <dbReference type="ChEBI" id="CHEBI:29108"/>
        <label>1</label>
    </ligand>
</feature>
<feature type="binding site" evidence="1">
    <location>
        <position position="292"/>
    </location>
    <ligand>
        <name>Ca(2+)</name>
        <dbReference type="ChEBI" id="CHEBI:29108"/>
        <label>1</label>
    </ligand>
</feature>
<feature type="binding site" evidence="1">
    <location>
        <position position="341"/>
    </location>
    <ligand>
        <name>Zn(2+)</name>
        <dbReference type="ChEBI" id="CHEBI:29105"/>
        <note>catalytic</note>
    </ligand>
</feature>
<feature type="binding site" evidence="1">
    <location>
        <position position="345"/>
    </location>
    <ligand>
        <name>Zn(2+)</name>
        <dbReference type="ChEBI" id="CHEBI:29105"/>
        <note>catalytic</note>
    </ligand>
</feature>
<feature type="binding site" evidence="1">
    <location>
        <position position="351"/>
    </location>
    <ligand>
        <name>Zn(2+)</name>
        <dbReference type="ChEBI" id="CHEBI:29105"/>
        <note>catalytic</note>
    </ligand>
</feature>
<feature type="binding site" evidence="1">
    <location>
        <position position="396"/>
    </location>
    <ligand>
        <name>Ca(2+)</name>
        <dbReference type="ChEBI" id="CHEBI:29108"/>
        <label>1</label>
    </ligand>
</feature>
<feature type="binding site" evidence="1">
    <location>
        <position position="399"/>
    </location>
    <ligand>
        <name>Ca(2+)</name>
        <dbReference type="ChEBI" id="CHEBI:29108"/>
        <label>1</label>
    </ligand>
</feature>
<feature type="binding site" evidence="1">
    <location>
        <position position="414"/>
    </location>
    <ligand>
        <name>Ca(2+)</name>
        <dbReference type="ChEBI" id="CHEBI:29108"/>
        <label>2</label>
    </ligand>
</feature>
<feature type="binding site" evidence="1">
    <location>
        <position position="416"/>
    </location>
    <ligand>
        <name>Ca(2+)</name>
        <dbReference type="ChEBI" id="CHEBI:29108"/>
        <label>2</label>
    </ligand>
</feature>
<feature type="binding site" evidence="1">
    <location>
        <position position="418"/>
    </location>
    <ligand>
        <name>Ca(2+)</name>
        <dbReference type="ChEBI" id="CHEBI:29108"/>
        <label>2</label>
    </ligand>
</feature>
<feature type="binding site" evidence="1">
    <location>
        <position position="421"/>
    </location>
    <ligand>
        <name>Ca(2+)</name>
        <dbReference type="ChEBI" id="CHEBI:29108"/>
        <label>2</label>
    </ligand>
</feature>
<feature type="binding site" evidence="1">
    <location>
        <position position="424"/>
    </location>
    <ligand>
        <name>Ca(2+)</name>
        <dbReference type="ChEBI" id="CHEBI:29108"/>
        <label>2</label>
    </ligand>
</feature>
<feature type="binding site" evidence="1">
    <location>
        <position position="475"/>
    </location>
    <ligand>
        <name>Ca(2+)</name>
        <dbReference type="ChEBI" id="CHEBI:29108"/>
        <label>3</label>
    </ligand>
</feature>
<feature type="binding site" evidence="1">
    <location>
        <position position="476"/>
    </location>
    <ligand>
        <name>Ca(2+)</name>
        <dbReference type="ChEBI" id="CHEBI:29108"/>
        <label>3</label>
    </ligand>
</feature>
<feature type="binding site" evidence="1">
    <location>
        <position position="478"/>
    </location>
    <ligand>
        <name>Ca(2+)</name>
        <dbReference type="ChEBI" id="CHEBI:29108"/>
        <label>3</label>
    </ligand>
</feature>
<feature type="binding site" evidence="1">
    <location>
        <position position="490"/>
    </location>
    <ligand>
        <name>Ca(2+)</name>
        <dbReference type="ChEBI" id="CHEBI:29108"/>
        <label>3</label>
    </ligand>
</feature>
<feature type="glycosylation site" description="N-linked (GlcNAc...) asparagine" evidence="2">
    <location>
        <position position="282"/>
    </location>
</feature>
<feature type="glycosylation site" description="N-linked (GlcNAc...) asparagine" evidence="2">
    <location>
        <position position="437"/>
    </location>
</feature>
<feature type="glycosylation site" description="N-linked (GlcNAc...) asparagine" evidence="2">
    <location>
        <position position="550"/>
    </location>
</feature>
<feature type="glycosylation site" description="N-linked (GlcNAc...) asparagine" evidence="2">
    <location>
        <position position="572"/>
    </location>
</feature>
<feature type="disulfide bond" evidence="1">
    <location>
        <begin position="316"/>
        <end position="396"/>
    </location>
</feature>
<feature type="disulfide bond" evidence="1">
    <location>
        <begin position="356"/>
        <end position="380"/>
    </location>
</feature>
<feature type="disulfide bond" evidence="1">
    <location>
        <begin position="358"/>
        <end position="363"/>
    </location>
</feature>
<feature type="disulfide bond" evidence="1">
    <location>
        <begin position="412"/>
        <end position="441"/>
    </location>
</feature>
<feature type="disulfide bond" evidence="1">
    <location>
        <begin position="423"/>
        <end position="436"/>
    </location>
</feature>
<feature type="disulfide bond" evidence="1">
    <location>
        <begin position="425"/>
        <end position="431"/>
    </location>
</feature>
<feature type="disulfide bond" evidence="1">
    <location>
        <begin position="435"/>
        <end position="458"/>
    </location>
</feature>
<feature type="disulfide bond" evidence="1">
    <location>
        <begin position="449"/>
        <end position="455"/>
    </location>
</feature>
<feature type="disulfide bond" evidence="1">
    <location>
        <begin position="454"/>
        <end position="480"/>
    </location>
</feature>
<feature type="disulfide bond" evidence="1">
    <location>
        <begin position="467"/>
        <end position="487"/>
    </location>
</feature>
<feature type="disulfide bond" evidence="1">
    <location>
        <begin position="474"/>
        <end position="506"/>
    </location>
</feature>
<feature type="disulfide bond" evidence="1">
    <location>
        <begin position="499"/>
        <end position="511"/>
    </location>
</feature>
<feature type="disulfide bond" evidence="1">
    <location>
        <begin position="518"/>
        <end position="568"/>
    </location>
</feature>
<feature type="disulfide bond" evidence="1">
    <location>
        <begin position="533"/>
        <end position="575"/>
    </location>
</feature>
<feature type="disulfide bond" evidence="1">
    <location>
        <begin position="543"/>
        <end position="577"/>
    </location>
</feature>
<feature type="disulfide bond" evidence="1">
    <location>
        <begin position="546"/>
        <end position="556"/>
    </location>
</feature>
<feature type="disulfide bond" evidence="1">
    <location>
        <begin position="563"/>
        <end position="601"/>
    </location>
</feature>
<feature type="disulfide bond" evidence="1">
    <location>
        <begin position="595"/>
        <end position="606"/>
    </location>
</feature>
<sequence length="613" mass="68427">MIEVLLVTICFTVFPYQGSPIILESGNVNDYEVVYPQKVPALPKGGVQNPQPETKYEDTMQYEFHVNGEPVVLHLERNKGLFSEDYTETHYAPDGREITTSPPVQDHCYYHGYIQNEADSSAAISACDGLKGHFKHRGETYFIEPLKLSNSESHAIYKDEHVEKEDEIPKICGVTQTTSESDETIEKISQLTNTPEQDRYLQVKKYIELYVVVDNRMYRNYNSNRDAINERVYEMVNTLNVMYRPLNFFIALIGLEIWSNQDEINIEPEVAVTLRSFGEWRNTTLLPRKRNDNAQLLTGIDFNGATVGLAYVGTLCRPTQSVAVIQDHSKRTSMVASTMAHELGHNLGINHDSASCNCNAGPCIMSATISNQPLSEFSSCSVQEHQRYLLRVRPQCILNKPLRKDIVTPPVCGNYFVERGEECDCGSPQDCQSACCNATTCKLQHEAQCDSGECCEQCKFKKAGAECRAAKDDCDLPESCTGQSAKCPTDSFQRNGHPCQNNQGYCYNGKCLIMTNQCIALKGPGVNVSPDECFTLKQNDPECGFCRIENGTKIPCAEKDKMCGKLLCQEGNATCICFPTTDDPDYGMVEPGTKCGDGKVCINRQCVDVQTAY</sequence>
<protein>
    <recommendedName>
        <fullName>Zinc metalloproteinase-disintegrin-like MTP8</fullName>
        <ecNumber>3.4.24.-</ecNumber>
    </recommendedName>
    <alternativeName>
        <fullName>Snake venom metalloproteinase</fullName>
        <shortName>SVMP</shortName>
    </alternativeName>
</protein>
<name>VM38_DRYCN</name>
<reference key="1">
    <citation type="journal article" date="2011" name="J. Proteome Res.">
        <title>Identification of novel proteins from the venom of a cryptic snake Drysdalia coronoides by a combined transcriptomics and proteomics approach.</title>
        <authorList>
            <person name="Chatrath S.T."/>
            <person name="Chapeaurouge A."/>
            <person name="Lin Q."/>
            <person name="Lim T.K."/>
            <person name="Dunstan N."/>
            <person name="Mirtschin P."/>
            <person name="Kumar P.P."/>
            <person name="Kini R.M."/>
        </authorList>
    </citation>
    <scope>NUCLEOTIDE SEQUENCE [MRNA]</scope>
    <scope>IDENTIFICATION BY MASS SPECTROMETRY</scope>
    <source>
        <tissue>Venom</tissue>
        <tissue>Venom gland</tissue>
    </source>
</reference>
<comment type="function">
    <text>Snake venom zinc metalloproteinase that may impair hemostasis in the prey.</text>
</comment>
<comment type="cofactor">
    <cofactor evidence="1">
        <name>Zn(2+)</name>
        <dbReference type="ChEBI" id="CHEBI:29105"/>
    </cofactor>
    <text evidence="1">Binds 1 zinc ion per subunit.</text>
</comment>
<comment type="subunit">
    <text evidence="1">Monomer.</text>
</comment>
<comment type="subcellular location">
    <subcellularLocation>
        <location>Secreted</location>
    </subcellularLocation>
</comment>
<comment type="tissue specificity">
    <text>Expressed by the venom gland.</text>
</comment>
<comment type="similarity">
    <text evidence="5">Belongs to the venom metalloproteinase (M12B) family. P-III subfamily.</text>
</comment>
<evidence type="ECO:0000250" key="1"/>
<evidence type="ECO:0000255" key="2"/>
<evidence type="ECO:0000255" key="3">
    <source>
        <dbReference type="PROSITE-ProRule" id="PRU00068"/>
    </source>
</evidence>
<evidence type="ECO:0000255" key="4">
    <source>
        <dbReference type="PROSITE-ProRule" id="PRU00276"/>
    </source>
</evidence>
<evidence type="ECO:0000305" key="5"/>
<proteinExistence type="evidence at protein level"/>
<organism>
    <name type="scientific">Drysdalia coronoides</name>
    <name type="common">White-lipped snake</name>
    <name type="synonym">Hoplocephalus coronoides</name>
    <dbReference type="NCBI Taxonomy" id="66186"/>
    <lineage>
        <taxon>Eukaryota</taxon>
        <taxon>Metazoa</taxon>
        <taxon>Chordata</taxon>
        <taxon>Craniata</taxon>
        <taxon>Vertebrata</taxon>
        <taxon>Euteleostomi</taxon>
        <taxon>Lepidosauria</taxon>
        <taxon>Squamata</taxon>
        <taxon>Bifurcata</taxon>
        <taxon>Unidentata</taxon>
        <taxon>Episquamata</taxon>
        <taxon>Toxicofera</taxon>
        <taxon>Serpentes</taxon>
        <taxon>Colubroidea</taxon>
        <taxon>Elapidae</taxon>
        <taxon>Notechinae</taxon>
        <taxon>Drysdalia</taxon>
    </lineage>
</organism>